<keyword id="KW-0238">DNA-binding</keyword>
<keyword id="KW-0479">Metal-binding</keyword>
<keyword id="KW-1185">Reference proteome</keyword>
<keyword id="KW-0862">Zinc</keyword>
<keyword id="KW-0863">Zinc-finger</keyword>
<protein>
    <recommendedName>
        <fullName>Zinc finger CCCH domain-containing protein 36</fullName>
        <shortName>OsC3H36</shortName>
    </recommendedName>
</protein>
<organism>
    <name type="scientific">Oryza sativa subsp. japonica</name>
    <name type="common">Rice</name>
    <dbReference type="NCBI Taxonomy" id="39947"/>
    <lineage>
        <taxon>Eukaryota</taxon>
        <taxon>Viridiplantae</taxon>
        <taxon>Streptophyta</taxon>
        <taxon>Embryophyta</taxon>
        <taxon>Tracheophyta</taxon>
        <taxon>Spermatophyta</taxon>
        <taxon>Magnoliopsida</taxon>
        <taxon>Liliopsida</taxon>
        <taxon>Poales</taxon>
        <taxon>Poaceae</taxon>
        <taxon>BOP clade</taxon>
        <taxon>Oryzoideae</taxon>
        <taxon>Oryzeae</taxon>
        <taxon>Oryzinae</taxon>
        <taxon>Oryza</taxon>
        <taxon>Oryza sativa</taxon>
    </lineage>
</organism>
<feature type="chain" id="PRO_0000346831" description="Zinc finger CCCH domain-containing protein 36">
    <location>
        <begin position="1"/>
        <end position="703"/>
    </location>
</feature>
<feature type="zinc finger region" description="C3H1-type" evidence="1">
    <location>
        <begin position="176"/>
        <end position="203"/>
    </location>
</feature>
<feature type="region of interest" description="Disordered" evidence="2">
    <location>
        <begin position="1"/>
        <end position="42"/>
    </location>
</feature>
<feature type="region of interest" description="Disordered" evidence="2">
    <location>
        <begin position="112"/>
        <end position="176"/>
    </location>
</feature>
<feature type="region of interest" description="Disordered" evidence="2">
    <location>
        <begin position="204"/>
        <end position="242"/>
    </location>
</feature>
<feature type="region of interest" description="Disordered" evidence="2">
    <location>
        <begin position="442"/>
        <end position="481"/>
    </location>
</feature>
<feature type="compositionally biased region" description="Low complexity" evidence="2">
    <location>
        <begin position="9"/>
        <end position="25"/>
    </location>
</feature>
<feature type="compositionally biased region" description="Basic and acidic residues" evidence="2">
    <location>
        <begin position="112"/>
        <end position="125"/>
    </location>
</feature>
<feature type="compositionally biased region" description="Polar residues" evidence="2">
    <location>
        <begin position="149"/>
        <end position="169"/>
    </location>
</feature>
<feature type="compositionally biased region" description="Basic and acidic residues" evidence="2">
    <location>
        <begin position="451"/>
        <end position="468"/>
    </location>
</feature>
<feature type="compositionally biased region" description="Low complexity" evidence="2">
    <location>
        <begin position="470"/>
        <end position="481"/>
    </location>
</feature>
<evidence type="ECO:0000255" key="1">
    <source>
        <dbReference type="PROSITE-ProRule" id="PRU00723"/>
    </source>
</evidence>
<evidence type="ECO:0000256" key="2">
    <source>
        <dbReference type="SAM" id="MobiDB-lite"/>
    </source>
</evidence>
<evidence type="ECO:0000305" key="3"/>
<sequence>MAGGGRGAGLPAAGEAAKAGRVGVGTTKRARDPSPNSKDPNGVVANLLWRRYSGKVVAEVKASILPYVASTLEAKQVEKGKEEGLTGKTSRERERRKGGFVGVIAAEKKPALQLHGDEKYQKKAGNDPVPPTIDDTSKTGGLHLHGGHVSQSPPDSNALSSQRFGSSSPGGDMKNKTRKRTCTFYAQGRCKNGKSCTFLHEGEVSGSDNQVYGNHGGTGEGSEIQHPSSSKEHQFKNSAGSSQHEIYRTLVHAYGEDNRGLTHPVVKHSCHMLKASHGFKIGGSLTANPTNEVVQLPVVQEKNHEPYFMGHQISLGTNNCLNDMGAYSRLRLDGGKLQFEVAKGDSPRDSHLSRSYLEKNPLKPDYRYQPFDSTISLDPHQYSKKLSAYGGATENLPHKHQEEKSSSHVSYSLNSYTGFRKQGHDSSDFFLVNQSLRATSHHGTLPLHQLTPDKDASHHKGADFDKGGTSRSTLHVSSSSQPVVASAGKLSPIKDEVWITSVPFVPSFNFPDFPGSTSPSKSQYDPLVDSIDPPKVESLNNLKTSNISCSISSQHVDTNVIRGGSLEKPLTFADKLARNVSAKGSNDFGLISYDRGHSSSLDGDNRVKTCERKNDASLNNEKSDFRFHLVEHVKELVKPIWKEGNLSKEAHKLIVKKSVDKIFASLEPNQMPETEKAITTYITASAPKIEKLVKAYVDRYRTS</sequence>
<dbReference type="EMBL" id="AC108523">
    <property type="protein sequence ID" value="AAT07585.1"/>
    <property type="molecule type" value="Genomic_DNA"/>
</dbReference>
<dbReference type="EMBL" id="AC130605">
    <property type="protein sequence ID" value="AAT44278.1"/>
    <property type="molecule type" value="Genomic_DNA"/>
</dbReference>
<dbReference type="EMBL" id="AP008211">
    <property type="protein sequence ID" value="BAF17857.2"/>
    <property type="status" value="ALT_SEQ"/>
    <property type="molecule type" value="Genomic_DNA"/>
</dbReference>
<dbReference type="EMBL" id="AP014961">
    <property type="status" value="NOT_ANNOTATED_CDS"/>
    <property type="molecule type" value="Genomic_DNA"/>
</dbReference>
<dbReference type="EMBL" id="CM000142">
    <property type="protein sequence ID" value="EAZ34807.1"/>
    <property type="molecule type" value="Genomic_DNA"/>
</dbReference>
<dbReference type="FunCoup" id="Q75K81">
    <property type="interactions" value="530"/>
</dbReference>
<dbReference type="STRING" id="39947.Q75K81"/>
<dbReference type="PaxDb" id="39947-Q75K81"/>
<dbReference type="KEGG" id="dosa:Os05g0497500"/>
<dbReference type="eggNOG" id="ENOG502RGRS">
    <property type="taxonomic scope" value="Eukaryota"/>
</dbReference>
<dbReference type="HOGENOM" id="CLU_459609_0_0_1"/>
<dbReference type="InParanoid" id="Q75K81"/>
<dbReference type="Proteomes" id="UP000000763">
    <property type="component" value="Chromosome 5"/>
</dbReference>
<dbReference type="Proteomes" id="UP000007752">
    <property type="component" value="Chromosome 5"/>
</dbReference>
<dbReference type="Proteomes" id="UP000059680">
    <property type="component" value="Chromosome 5"/>
</dbReference>
<dbReference type="GO" id="GO:0003677">
    <property type="term" value="F:DNA binding"/>
    <property type="evidence" value="ECO:0007669"/>
    <property type="project" value="UniProtKB-KW"/>
</dbReference>
<dbReference type="GO" id="GO:0008270">
    <property type="term" value="F:zinc ion binding"/>
    <property type="evidence" value="ECO:0007669"/>
    <property type="project" value="UniProtKB-KW"/>
</dbReference>
<dbReference type="Gene3D" id="4.10.1000.10">
    <property type="entry name" value="Zinc finger, CCCH-type"/>
    <property type="match status" value="1"/>
</dbReference>
<dbReference type="InterPro" id="IPR052650">
    <property type="entry name" value="Zinc_finger_CCCH"/>
</dbReference>
<dbReference type="InterPro" id="IPR041367">
    <property type="entry name" value="Znf-CCCH_4"/>
</dbReference>
<dbReference type="InterPro" id="IPR000571">
    <property type="entry name" value="Znf_CCCH"/>
</dbReference>
<dbReference type="InterPro" id="IPR036855">
    <property type="entry name" value="Znf_CCCH_sf"/>
</dbReference>
<dbReference type="PANTHER" id="PTHR36886">
    <property type="entry name" value="PROTEIN FRIGIDA-ESSENTIAL 1"/>
    <property type="match status" value="1"/>
</dbReference>
<dbReference type="PANTHER" id="PTHR36886:SF3">
    <property type="entry name" value="PROTEIN FRIGIDA-ESSENTIAL 1"/>
    <property type="match status" value="1"/>
</dbReference>
<dbReference type="Pfam" id="PF18044">
    <property type="entry name" value="zf-CCCH_4"/>
    <property type="match status" value="1"/>
</dbReference>
<dbReference type="SMART" id="SM00356">
    <property type="entry name" value="ZnF_C3H1"/>
    <property type="match status" value="1"/>
</dbReference>
<dbReference type="SUPFAM" id="SSF90229">
    <property type="entry name" value="CCCH zinc finger"/>
    <property type="match status" value="1"/>
</dbReference>
<dbReference type="PROSITE" id="PS50103">
    <property type="entry name" value="ZF_C3H1"/>
    <property type="match status" value="1"/>
</dbReference>
<name>C3H36_ORYSJ</name>
<reference key="1">
    <citation type="journal article" date="2005" name="Mol. Genet. Genomics">
        <title>A fine physical map of the rice chromosome 5.</title>
        <authorList>
            <person name="Cheng C.-H."/>
            <person name="Chung M.C."/>
            <person name="Liu S.-M."/>
            <person name="Chen S.-K."/>
            <person name="Kao F.Y."/>
            <person name="Lin S.-J."/>
            <person name="Hsiao S.-H."/>
            <person name="Tseng I.C."/>
            <person name="Hsing Y.-I.C."/>
            <person name="Wu H.-P."/>
            <person name="Chen C.-S."/>
            <person name="Shaw J.-F."/>
            <person name="Wu J."/>
            <person name="Matsumoto T."/>
            <person name="Sasaki T."/>
            <person name="Chen H.-C."/>
            <person name="Chow T.-Y."/>
        </authorList>
    </citation>
    <scope>NUCLEOTIDE SEQUENCE [LARGE SCALE GENOMIC DNA]</scope>
    <source>
        <strain>cv. Nipponbare</strain>
    </source>
</reference>
<reference key="2">
    <citation type="journal article" date="2005" name="Nature">
        <title>The map-based sequence of the rice genome.</title>
        <authorList>
            <consortium name="International rice genome sequencing project (IRGSP)"/>
        </authorList>
    </citation>
    <scope>NUCLEOTIDE SEQUENCE [LARGE SCALE GENOMIC DNA]</scope>
    <source>
        <strain>cv. Nipponbare</strain>
    </source>
</reference>
<reference key="3">
    <citation type="journal article" date="2008" name="Nucleic Acids Res.">
        <title>The rice annotation project database (RAP-DB): 2008 update.</title>
        <authorList>
            <consortium name="The rice annotation project (RAP)"/>
        </authorList>
    </citation>
    <scope>GENOME REANNOTATION</scope>
    <source>
        <strain>cv. Nipponbare</strain>
    </source>
</reference>
<reference key="4">
    <citation type="journal article" date="2013" name="Rice">
        <title>Improvement of the Oryza sativa Nipponbare reference genome using next generation sequence and optical map data.</title>
        <authorList>
            <person name="Kawahara Y."/>
            <person name="de la Bastide M."/>
            <person name="Hamilton J.P."/>
            <person name="Kanamori H."/>
            <person name="McCombie W.R."/>
            <person name="Ouyang S."/>
            <person name="Schwartz D.C."/>
            <person name="Tanaka T."/>
            <person name="Wu J."/>
            <person name="Zhou S."/>
            <person name="Childs K.L."/>
            <person name="Davidson R.M."/>
            <person name="Lin H."/>
            <person name="Quesada-Ocampo L."/>
            <person name="Vaillancourt B."/>
            <person name="Sakai H."/>
            <person name="Lee S.S."/>
            <person name="Kim J."/>
            <person name="Numa H."/>
            <person name="Itoh T."/>
            <person name="Buell C.R."/>
            <person name="Matsumoto T."/>
        </authorList>
    </citation>
    <scope>GENOME REANNOTATION</scope>
    <source>
        <strain>cv. Nipponbare</strain>
    </source>
</reference>
<reference key="5">
    <citation type="journal article" date="2005" name="PLoS Biol.">
        <title>The genomes of Oryza sativa: a history of duplications.</title>
        <authorList>
            <person name="Yu J."/>
            <person name="Wang J."/>
            <person name="Lin W."/>
            <person name="Li S."/>
            <person name="Li H."/>
            <person name="Zhou J."/>
            <person name="Ni P."/>
            <person name="Dong W."/>
            <person name="Hu S."/>
            <person name="Zeng C."/>
            <person name="Zhang J."/>
            <person name="Zhang Y."/>
            <person name="Li R."/>
            <person name="Xu Z."/>
            <person name="Li S."/>
            <person name="Li X."/>
            <person name="Zheng H."/>
            <person name="Cong L."/>
            <person name="Lin L."/>
            <person name="Yin J."/>
            <person name="Geng J."/>
            <person name="Li G."/>
            <person name="Shi J."/>
            <person name="Liu J."/>
            <person name="Lv H."/>
            <person name="Li J."/>
            <person name="Wang J."/>
            <person name="Deng Y."/>
            <person name="Ran L."/>
            <person name="Shi X."/>
            <person name="Wang X."/>
            <person name="Wu Q."/>
            <person name="Li C."/>
            <person name="Ren X."/>
            <person name="Wang J."/>
            <person name="Wang X."/>
            <person name="Li D."/>
            <person name="Liu D."/>
            <person name="Zhang X."/>
            <person name="Ji Z."/>
            <person name="Zhao W."/>
            <person name="Sun Y."/>
            <person name="Zhang Z."/>
            <person name="Bao J."/>
            <person name="Han Y."/>
            <person name="Dong L."/>
            <person name="Ji J."/>
            <person name="Chen P."/>
            <person name="Wu S."/>
            <person name="Liu J."/>
            <person name="Xiao Y."/>
            <person name="Bu D."/>
            <person name="Tan J."/>
            <person name="Yang L."/>
            <person name="Ye C."/>
            <person name="Zhang J."/>
            <person name="Xu J."/>
            <person name="Zhou Y."/>
            <person name="Yu Y."/>
            <person name="Zhang B."/>
            <person name="Zhuang S."/>
            <person name="Wei H."/>
            <person name="Liu B."/>
            <person name="Lei M."/>
            <person name="Yu H."/>
            <person name="Li Y."/>
            <person name="Xu H."/>
            <person name="Wei S."/>
            <person name="He X."/>
            <person name="Fang L."/>
            <person name="Zhang Z."/>
            <person name="Zhang Y."/>
            <person name="Huang X."/>
            <person name="Su Z."/>
            <person name="Tong W."/>
            <person name="Li J."/>
            <person name="Tong Z."/>
            <person name="Li S."/>
            <person name="Ye J."/>
            <person name="Wang L."/>
            <person name="Fang L."/>
            <person name="Lei T."/>
            <person name="Chen C.-S."/>
            <person name="Chen H.-C."/>
            <person name="Xu Z."/>
            <person name="Li H."/>
            <person name="Huang H."/>
            <person name="Zhang F."/>
            <person name="Xu H."/>
            <person name="Li N."/>
            <person name="Zhao C."/>
            <person name="Li S."/>
            <person name="Dong L."/>
            <person name="Huang Y."/>
            <person name="Li L."/>
            <person name="Xi Y."/>
            <person name="Qi Q."/>
            <person name="Li W."/>
            <person name="Zhang B."/>
            <person name="Hu W."/>
            <person name="Zhang Y."/>
            <person name="Tian X."/>
            <person name="Jiao Y."/>
            <person name="Liang X."/>
            <person name="Jin J."/>
            <person name="Gao L."/>
            <person name="Zheng W."/>
            <person name="Hao B."/>
            <person name="Liu S.-M."/>
            <person name="Wang W."/>
            <person name="Yuan L."/>
            <person name="Cao M."/>
            <person name="McDermott J."/>
            <person name="Samudrala R."/>
            <person name="Wang J."/>
            <person name="Wong G.K.-S."/>
            <person name="Yang H."/>
        </authorList>
    </citation>
    <scope>NUCLEOTIDE SEQUENCE [LARGE SCALE GENOMIC DNA]</scope>
    <source>
        <strain>cv. Nipponbare</strain>
    </source>
</reference>
<reference key="6">
    <citation type="journal article" date="2008" name="BMC Genomics">
        <title>Genome-wide analysis of CCCH zinc finger family in Arabidopsis and rice.</title>
        <authorList>
            <person name="Wang D."/>
            <person name="Guo Y."/>
            <person name="Wu C."/>
            <person name="Yang G."/>
            <person name="Li Y."/>
            <person name="Zheng C."/>
        </authorList>
    </citation>
    <scope>NOMENCLATURE</scope>
</reference>
<gene>
    <name type="ordered locus">Os05g0497500</name>
    <name type="ordered locus">LOC_Os05g41790</name>
    <name type="ORF">OJ1118_C04.11</name>
    <name type="ORF">OsJ_018290</name>
    <name type="ORF">P0010D04.1</name>
</gene>
<comment type="sequence caution" evidence="3">
    <conflict type="erroneous gene model prediction">
        <sequence resource="EMBL-CDS" id="BAF17857"/>
    </conflict>
</comment>
<proteinExistence type="predicted"/>
<accession>Q75K81</accession>
<accession>Q0DH16</accession>